<protein>
    <recommendedName>
        <fullName>Probable alpha-L-arabinofuranosidase A</fullName>
        <shortName>ABF A</shortName>
        <shortName>Arabinosidase A</shortName>
        <ecNumber>3.2.1.55</ecNumber>
    </recommendedName>
</protein>
<dbReference type="EC" id="3.2.1.55"/>
<dbReference type="EMBL" id="EQ963480">
    <property type="protein sequence ID" value="EED48897.1"/>
    <property type="status" value="ALT_SEQ"/>
    <property type="molecule type" value="Genomic_DNA"/>
</dbReference>
<dbReference type="RefSeq" id="XP_002380798.1">
    <property type="nucleotide sequence ID" value="XM_002380757.1"/>
</dbReference>
<dbReference type="SMR" id="B8NKA3"/>
<dbReference type="STRING" id="332952.B8NKA3"/>
<dbReference type="GlyCosmos" id="B8NKA3">
    <property type="glycosylation" value="9 sites, No reported glycans"/>
</dbReference>
<dbReference type="VEuPathDB" id="FungiDB:AFLA_009189"/>
<dbReference type="eggNOG" id="ENOG502QQEX">
    <property type="taxonomic scope" value="Eukaryota"/>
</dbReference>
<dbReference type="UniPathway" id="UPA00667"/>
<dbReference type="GO" id="GO:0005576">
    <property type="term" value="C:extracellular region"/>
    <property type="evidence" value="ECO:0000250"/>
    <property type="project" value="UniProtKB"/>
</dbReference>
<dbReference type="GO" id="GO:0046556">
    <property type="term" value="F:alpha-L-arabinofuranosidase activity"/>
    <property type="evidence" value="ECO:0000250"/>
    <property type="project" value="UniProtKB"/>
</dbReference>
<dbReference type="GO" id="GO:0031222">
    <property type="term" value="P:arabinan catabolic process"/>
    <property type="evidence" value="ECO:0007669"/>
    <property type="project" value="UniProtKB-UniPathway"/>
</dbReference>
<dbReference type="GO" id="GO:0019566">
    <property type="term" value="P:arabinose metabolic process"/>
    <property type="evidence" value="ECO:0000250"/>
    <property type="project" value="UniProtKB"/>
</dbReference>
<dbReference type="GO" id="GO:0046373">
    <property type="term" value="P:L-arabinose metabolic process"/>
    <property type="evidence" value="ECO:0007669"/>
    <property type="project" value="InterPro"/>
</dbReference>
<dbReference type="FunFam" id="2.60.40.1180:FF:000036">
    <property type="entry name" value="Probable alpha-L-arabinofuranosidase A"/>
    <property type="match status" value="1"/>
</dbReference>
<dbReference type="FunFam" id="3.20.20.80:FF:000092">
    <property type="entry name" value="Probable alpha-L-arabinofuranosidase A"/>
    <property type="match status" value="1"/>
</dbReference>
<dbReference type="Gene3D" id="3.20.20.80">
    <property type="entry name" value="Glycosidases"/>
    <property type="match status" value="1"/>
</dbReference>
<dbReference type="Gene3D" id="2.60.40.1180">
    <property type="entry name" value="Golgi alpha-mannosidase II"/>
    <property type="match status" value="1"/>
</dbReference>
<dbReference type="InterPro" id="IPR010720">
    <property type="entry name" value="Alpha-L-AF_C"/>
</dbReference>
<dbReference type="InterPro" id="IPR055235">
    <property type="entry name" value="ASD1_cat"/>
</dbReference>
<dbReference type="InterPro" id="IPR013780">
    <property type="entry name" value="Glyco_hydro_b"/>
</dbReference>
<dbReference type="InterPro" id="IPR017853">
    <property type="entry name" value="Glycoside_hydrolase_SF"/>
</dbReference>
<dbReference type="InterPro" id="IPR051563">
    <property type="entry name" value="Glycosyl_Hydrolase_51"/>
</dbReference>
<dbReference type="PANTHER" id="PTHR31776">
    <property type="entry name" value="ALPHA-L-ARABINOFURANOSIDASE 1"/>
    <property type="match status" value="1"/>
</dbReference>
<dbReference type="PANTHER" id="PTHR31776:SF0">
    <property type="entry name" value="ALPHA-L-ARABINOFURANOSIDASE 1"/>
    <property type="match status" value="1"/>
</dbReference>
<dbReference type="Pfam" id="PF06964">
    <property type="entry name" value="Alpha-L-AF_C"/>
    <property type="match status" value="1"/>
</dbReference>
<dbReference type="Pfam" id="PF22848">
    <property type="entry name" value="ASD1_dom"/>
    <property type="match status" value="1"/>
</dbReference>
<dbReference type="SMART" id="SM00813">
    <property type="entry name" value="Alpha-L-AF_C"/>
    <property type="match status" value="1"/>
</dbReference>
<dbReference type="SUPFAM" id="SSF51445">
    <property type="entry name" value="(Trans)glycosidases"/>
    <property type="match status" value="1"/>
</dbReference>
<dbReference type="SUPFAM" id="SSF51011">
    <property type="entry name" value="Glycosyl hydrolase domain"/>
    <property type="match status" value="1"/>
</dbReference>
<organism>
    <name type="scientific">Aspergillus flavus (strain ATCC 200026 / FGSC A1120 / IAM 13836 / NRRL 3357 / JCM 12722 / SRRC 167)</name>
    <dbReference type="NCBI Taxonomy" id="332952"/>
    <lineage>
        <taxon>Eukaryota</taxon>
        <taxon>Fungi</taxon>
        <taxon>Dikarya</taxon>
        <taxon>Ascomycota</taxon>
        <taxon>Pezizomycotina</taxon>
        <taxon>Eurotiomycetes</taxon>
        <taxon>Eurotiomycetidae</taxon>
        <taxon>Eurotiales</taxon>
        <taxon>Aspergillaceae</taxon>
        <taxon>Aspergillus</taxon>
        <taxon>Aspergillus subgen. Circumdati</taxon>
    </lineage>
</organism>
<name>ABFA_ASPFN</name>
<sequence length="629" mass="68170">MVALSTLSGLSALPFLFSLVQNVYGVSLEVSTEKGNSSSPILYGFMFEDINHSGDGGIYGQLLRNNGLQGSKPGLTAWAAVGDATIAVDAQNPLTEAIPHSLKLDVKQGASGAVGFTNEGYWGVPVDGSEFLNTFWIKGNFSGDITVRLVGNNTGTEYGSTKISQSSNSSNFTKVLAKIPTKKAPDGAVLYELTVDGASVGGSSLNFGLFELFPQTYKSRSNGLKPQVAQPLADMKGSFLRFPGGNNLEGASEARRWKWNETIGPVENRPGRQGDWSYYNTDGLGLDEYFYWCEDMGLTPVLGVWAGFALESGGNTPITGDALKPYIDDVLNELEYVLGDASTKYGSLRASYGRKEPWKLTMVEIGNEDMLGGGCESYVERFTAFYDAIHAAYPDLTIIASTDQSSCLPSKLPEGAWVDYHNYNTADNLVKQFSQFDNKDRSVPYFIGEYSCQQDNAWPFMQGSVAEAVYMIGIERNSDVVKMAAYAPLLQLVNSTQWTPNLIAFTQNPSTVIETTSYYVQQMFSVNRGDTIHNVTSDSAFGPVYWVASSADDKYYVKLANYGADTQEITVTISGKTGGKLTVLADSDPKAFNSDTQTLVTPSESDVKATNGKFTFTLPAWSVGVLAAH</sequence>
<accession>B8NKA3</accession>
<reference key="1">
    <citation type="journal article" date="2015" name="Genome Announc.">
        <title>Genome sequence of Aspergillus flavus NRRL 3357, a strain that causes aflatoxin contamination of food and feed.</title>
        <authorList>
            <person name="Nierman W.C."/>
            <person name="Yu J."/>
            <person name="Fedorova-Abrams N.D."/>
            <person name="Losada L."/>
            <person name="Cleveland T.E."/>
            <person name="Bhatnagar D."/>
            <person name="Bennett J.W."/>
            <person name="Dean R."/>
            <person name="Payne G.A."/>
        </authorList>
    </citation>
    <scope>NUCLEOTIDE SEQUENCE [LARGE SCALE GENOMIC DNA]</scope>
    <source>
        <strain>ATCC 200026 / FGSC A1120 / IAM 13836 / NRRL 3357 / JCM 12722 / SRRC 167</strain>
    </source>
</reference>
<keyword id="KW-0119">Carbohydrate metabolism</keyword>
<keyword id="KW-0325">Glycoprotein</keyword>
<keyword id="KW-0326">Glycosidase</keyword>
<keyword id="KW-0378">Hydrolase</keyword>
<keyword id="KW-0624">Polysaccharide degradation</keyword>
<keyword id="KW-0964">Secreted</keyword>
<keyword id="KW-0732">Signal</keyword>
<evidence type="ECO:0000250" key="1"/>
<evidence type="ECO:0000255" key="2"/>
<evidence type="ECO:0000305" key="3"/>
<feature type="signal peptide" evidence="2">
    <location>
        <begin position="1"/>
        <end position="25"/>
    </location>
</feature>
<feature type="chain" id="PRO_0000394597" description="Probable alpha-L-arabinofuranosidase A">
    <location>
        <begin position="26"/>
        <end position="629"/>
    </location>
</feature>
<feature type="glycosylation site" description="N-linked (GlcNAc...) asparagine" evidence="2">
    <location>
        <position position="36"/>
    </location>
</feature>
<feature type="glycosylation site" description="N-linked (GlcNAc...) asparagine" evidence="2">
    <location>
        <position position="51"/>
    </location>
</feature>
<feature type="glycosylation site" description="N-linked (GlcNAc...) asparagine" evidence="2">
    <location>
        <position position="140"/>
    </location>
</feature>
<feature type="glycosylation site" description="N-linked (GlcNAc...) asparagine" evidence="2">
    <location>
        <position position="152"/>
    </location>
</feature>
<feature type="glycosylation site" description="N-linked (GlcNAc...) asparagine" evidence="2">
    <location>
        <position position="168"/>
    </location>
</feature>
<feature type="glycosylation site" description="N-linked (GlcNAc...) asparagine" evidence="2">
    <location>
        <position position="171"/>
    </location>
</feature>
<feature type="glycosylation site" description="N-linked (GlcNAc...) asparagine" evidence="2">
    <location>
        <position position="260"/>
    </location>
</feature>
<feature type="glycosylation site" description="N-linked (GlcNAc...) asparagine" evidence="2">
    <location>
        <position position="494"/>
    </location>
</feature>
<feature type="glycosylation site" description="N-linked (GlcNAc...) asparagine" evidence="2">
    <location>
        <position position="534"/>
    </location>
</feature>
<proteinExistence type="inferred from homology"/>
<gene>
    <name type="primary">abfA</name>
    <name type="ORF">AFLA_089770</name>
</gene>
<comment type="function">
    <text evidence="1">Alpha-L-arabinofuranosidase involved in the degradation of arabinoxylan, a major component of plant hemicellulose. Acts only on small linear 1,5-alpha-linked L-arabinofuranosyl oligosaccharides (By similarity).</text>
</comment>
<comment type="catalytic activity">
    <reaction>
        <text>Hydrolysis of terminal non-reducing alpha-L-arabinofuranoside residues in alpha-L-arabinosides.</text>
        <dbReference type="EC" id="3.2.1.55"/>
    </reaction>
</comment>
<comment type="pathway">
    <text>Glycan metabolism; L-arabinan degradation.</text>
</comment>
<comment type="subcellular location">
    <subcellularLocation>
        <location evidence="1">Secreted</location>
    </subcellularLocation>
</comment>
<comment type="similarity">
    <text evidence="3">Belongs to the glycosyl hydrolase 51 family.</text>
</comment>
<comment type="sequence caution" evidence="3">
    <conflict type="erroneous gene model prediction">
        <sequence resource="EMBL-CDS" id="EED48897"/>
    </conflict>
</comment>